<feature type="chain" id="PRO_0000242825" description="ATP phosphoribosyltransferase regulatory subunit">
    <location>
        <begin position="1"/>
        <end position="378"/>
    </location>
</feature>
<gene>
    <name evidence="1" type="primary">hisZ</name>
    <name type="ordered locus">BAB2_0182</name>
</gene>
<accession>Q2YIH8</accession>
<keyword id="KW-0028">Amino-acid biosynthesis</keyword>
<keyword id="KW-0963">Cytoplasm</keyword>
<keyword id="KW-0368">Histidine biosynthesis</keyword>
<keyword id="KW-1185">Reference proteome</keyword>
<evidence type="ECO:0000255" key="1">
    <source>
        <dbReference type="HAMAP-Rule" id="MF_00125"/>
    </source>
</evidence>
<evidence type="ECO:0000305" key="2"/>
<dbReference type="EMBL" id="AM040265">
    <property type="protein sequence ID" value="CAJ12348.1"/>
    <property type="status" value="ALT_INIT"/>
    <property type="molecule type" value="Genomic_DNA"/>
</dbReference>
<dbReference type="SMR" id="Q2YIH8"/>
<dbReference type="STRING" id="359391.BAB2_0182"/>
<dbReference type="KEGG" id="bmf:BAB2_0182"/>
<dbReference type="HOGENOM" id="CLU_025113_6_0_5"/>
<dbReference type="UniPathway" id="UPA00031">
    <property type="reaction ID" value="UER00006"/>
</dbReference>
<dbReference type="Proteomes" id="UP000002719">
    <property type="component" value="Chromosome II"/>
</dbReference>
<dbReference type="GO" id="GO:0005737">
    <property type="term" value="C:cytoplasm"/>
    <property type="evidence" value="ECO:0007669"/>
    <property type="project" value="UniProtKB-SubCell"/>
</dbReference>
<dbReference type="GO" id="GO:0004821">
    <property type="term" value="F:histidine-tRNA ligase activity"/>
    <property type="evidence" value="ECO:0007669"/>
    <property type="project" value="TreeGrafter"/>
</dbReference>
<dbReference type="GO" id="GO:0006427">
    <property type="term" value="P:histidyl-tRNA aminoacylation"/>
    <property type="evidence" value="ECO:0007669"/>
    <property type="project" value="TreeGrafter"/>
</dbReference>
<dbReference type="GO" id="GO:0000105">
    <property type="term" value="P:L-histidine biosynthetic process"/>
    <property type="evidence" value="ECO:0007669"/>
    <property type="project" value="UniProtKB-UniRule"/>
</dbReference>
<dbReference type="Gene3D" id="3.30.930.10">
    <property type="entry name" value="Bira Bifunctional Protein, Domain 2"/>
    <property type="match status" value="1"/>
</dbReference>
<dbReference type="HAMAP" id="MF_00125">
    <property type="entry name" value="HisZ"/>
    <property type="match status" value="1"/>
</dbReference>
<dbReference type="InterPro" id="IPR045864">
    <property type="entry name" value="aa-tRNA-synth_II/BPL/LPL"/>
</dbReference>
<dbReference type="InterPro" id="IPR041715">
    <property type="entry name" value="HisRS-like_core"/>
</dbReference>
<dbReference type="InterPro" id="IPR004516">
    <property type="entry name" value="HisRS/HisZ"/>
</dbReference>
<dbReference type="InterPro" id="IPR004517">
    <property type="entry name" value="HisZ"/>
</dbReference>
<dbReference type="NCBIfam" id="NF008948">
    <property type="entry name" value="PRK12295.1-1"/>
    <property type="match status" value="1"/>
</dbReference>
<dbReference type="NCBIfam" id="NF008951">
    <property type="entry name" value="PRK12295.1-4"/>
    <property type="match status" value="1"/>
</dbReference>
<dbReference type="PANTHER" id="PTHR43707:SF1">
    <property type="entry name" value="HISTIDINE--TRNA LIGASE, MITOCHONDRIAL-RELATED"/>
    <property type="match status" value="1"/>
</dbReference>
<dbReference type="PANTHER" id="PTHR43707">
    <property type="entry name" value="HISTIDYL-TRNA SYNTHETASE"/>
    <property type="match status" value="1"/>
</dbReference>
<dbReference type="Pfam" id="PF13393">
    <property type="entry name" value="tRNA-synt_His"/>
    <property type="match status" value="2"/>
</dbReference>
<dbReference type="PIRSF" id="PIRSF001549">
    <property type="entry name" value="His-tRNA_synth"/>
    <property type="match status" value="1"/>
</dbReference>
<dbReference type="SUPFAM" id="SSF55681">
    <property type="entry name" value="Class II aaRS and biotin synthetases"/>
    <property type="match status" value="1"/>
</dbReference>
<proteinExistence type="inferred from homology"/>
<sequence>MTMVGSRTSPIFNALRVELNAREAELVEIPLIQPADPFLDMAGEDLRRRIFLTENENGDSLCLRPEFTIPVCRNHIALNAATPKRYAYLGEVFRQRRDGAAEFLQAGIEDLGAADEAASDARSLADALSCVKAIAPDAPLEIVLGDQSVFAGMLKALGLPQGWRKKLLRSFGDAHSMDLALAELTGTQRRDPLPESLAVLVAEGDEIGLARMLEAEMLEAGISPGAGRTPVEIARRLIEKEDLAATHFPAAALDLLRQFLAIRVSLDMAAVTLRAFAADNALDLGAVLQKFEARADAIAQAGIEMKDIIYDASFGRPLDYYTGLVYEIRDASNRQDGVLAGGGRYDRLLTMLGACEAIPGVGFSIWLDRLQALAGEKQ</sequence>
<name>HISZ_BRUA2</name>
<protein>
    <recommendedName>
        <fullName evidence="1">ATP phosphoribosyltransferase regulatory subunit</fullName>
    </recommendedName>
</protein>
<comment type="function">
    <text evidence="1">Required for the first step of histidine biosynthesis. May allow the feedback regulation of ATP phosphoribosyltransferase activity by histidine.</text>
</comment>
<comment type="pathway">
    <text evidence="1">Amino-acid biosynthesis; L-histidine biosynthesis; L-histidine from 5-phospho-alpha-D-ribose 1-diphosphate: step 1/9.</text>
</comment>
<comment type="subunit">
    <text evidence="1">Heteromultimer composed of HisG and HisZ subunits.</text>
</comment>
<comment type="subcellular location">
    <subcellularLocation>
        <location evidence="1">Cytoplasm</location>
    </subcellularLocation>
</comment>
<comment type="miscellaneous">
    <text>This function is generally fulfilled by the C-terminal part of HisG, which is missing in some bacteria such as this one.</text>
</comment>
<comment type="similarity">
    <text evidence="1">Belongs to the class-II aminoacyl-tRNA synthetase family. HisZ subfamily.</text>
</comment>
<comment type="sequence caution" evidence="2">
    <conflict type="erroneous initiation">
        <sequence resource="EMBL-CDS" id="CAJ12348"/>
    </conflict>
</comment>
<reference key="1">
    <citation type="journal article" date="2005" name="Infect. Immun.">
        <title>Whole-genome analyses of speciation events in pathogenic Brucellae.</title>
        <authorList>
            <person name="Chain P.S."/>
            <person name="Comerci D.J."/>
            <person name="Tolmasky M.E."/>
            <person name="Larimer F.W."/>
            <person name="Malfatti S.A."/>
            <person name="Vergez L.M."/>
            <person name="Aguero F."/>
            <person name="Land M.L."/>
            <person name="Ugalde R.A."/>
            <person name="Garcia E."/>
        </authorList>
    </citation>
    <scope>NUCLEOTIDE SEQUENCE [LARGE SCALE GENOMIC DNA]</scope>
    <source>
        <strain>2308</strain>
    </source>
</reference>
<organism>
    <name type="scientific">Brucella abortus (strain 2308)</name>
    <dbReference type="NCBI Taxonomy" id="359391"/>
    <lineage>
        <taxon>Bacteria</taxon>
        <taxon>Pseudomonadati</taxon>
        <taxon>Pseudomonadota</taxon>
        <taxon>Alphaproteobacteria</taxon>
        <taxon>Hyphomicrobiales</taxon>
        <taxon>Brucellaceae</taxon>
        <taxon>Brucella/Ochrobactrum group</taxon>
        <taxon>Brucella</taxon>
    </lineage>
</organism>